<sequence>MKTAVLSLLLALQAYARVTGSPSGFAAGTTGGGSATPAAPSSLDELVQWITDDTPRVILIDRTWDFIGTEGTTTGKCCSMPSTTVCNGGTSKGQAWIQDHCDGGSWVSCKYDNAALTPMDVGSNKSIVGVGNKGVIKGKGLRVRNGNKNVIIQNIHITNLNPQYVWGGDAITLDNADQVWIDHNKISLIGRQFIVSGWGKAGHVTISNNEFDGRTSWSAGCNGKHYWTLLLLGEQDYYTFEGNWLHDVSGRAPHMGTDHTKSQIFFHGVNNYFQNLGGHAFDVDTNTWVLLEGNYFENVKTPLTDTSLKAGGKLYTTSTVNAAGACLDKLGYICEWNRLAGSGAWQDRTDADVKTKAATYKNSLVGHYPVADVPAKVVANAGVGKV</sequence>
<name>PELF_NEOFI</name>
<gene>
    <name type="primary">pelF</name>
    <name type="ORF">NFIA_077100</name>
</gene>
<accession>A1DEH0</accession>
<evidence type="ECO:0000250" key="1"/>
<evidence type="ECO:0000255" key="2"/>
<evidence type="ECO:0000305" key="3"/>
<feature type="signal peptide" evidence="2">
    <location>
        <begin position="1"/>
        <end position="16"/>
    </location>
</feature>
<feature type="chain" id="PRO_0000394363" description="Probable pectin lyase F">
    <location>
        <begin position="17"/>
        <end position="386"/>
    </location>
</feature>
<feature type="active site" evidence="2">
    <location>
        <position position="251"/>
    </location>
</feature>
<feature type="glycosylation site" description="N-linked (GlcNAc...) asparagine" evidence="2">
    <location>
        <position position="124"/>
    </location>
</feature>
<feature type="disulfide bond" evidence="1">
    <location>
        <begin position="77"/>
        <end position="101"/>
    </location>
</feature>
<feature type="disulfide bond" evidence="1">
    <location>
        <begin position="326"/>
        <end position="334"/>
    </location>
</feature>
<organism>
    <name type="scientific">Neosartorya fischeri (strain ATCC 1020 / DSM 3700 / CBS 544.65 / FGSC A1164 / JCM 1740 / NRRL 181 / WB 181)</name>
    <name type="common">Aspergillus fischerianus</name>
    <dbReference type="NCBI Taxonomy" id="331117"/>
    <lineage>
        <taxon>Eukaryota</taxon>
        <taxon>Fungi</taxon>
        <taxon>Dikarya</taxon>
        <taxon>Ascomycota</taxon>
        <taxon>Pezizomycotina</taxon>
        <taxon>Eurotiomycetes</taxon>
        <taxon>Eurotiomycetidae</taxon>
        <taxon>Eurotiales</taxon>
        <taxon>Aspergillaceae</taxon>
        <taxon>Aspergillus</taxon>
        <taxon>Aspergillus subgen. Fumigati</taxon>
    </lineage>
</organism>
<keyword id="KW-0119">Carbohydrate metabolism</keyword>
<keyword id="KW-0961">Cell wall biogenesis/degradation</keyword>
<keyword id="KW-1015">Disulfide bond</keyword>
<keyword id="KW-0325">Glycoprotein</keyword>
<keyword id="KW-0456">Lyase</keyword>
<keyword id="KW-0624">Polysaccharide degradation</keyword>
<keyword id="KW-1185">Reference proteome</keyword>
<keyword id="KW-0964">Secreted</keyword>
<keyword id="KW-0732">Signal</keyword>
<protein>
    <recommendedName>
        <fullName>Probable pectin lyase F</fullName>
        <shortName>PLF</shortName>
        <ecNumber>4.2.2.10</ecNumber>
    </recommendedName>
</protein>
<dbReference type="EC" id="4.2.2.10"/>
<dbReference type="EMBL" id="DS027696">
    <property type="protein sequence ID" value="EAW17777.1"/>
    <property type="molecule type" value="Genomic_DNA"/>
</dbReference>
<dbReference type="RefSeq" id="XP_001259674.1">
    <property type="nucleotide sequence ID" value="XM_001259673.1"/>
</dbReference>
<dbReference type="SMR" id="A1DEH0"/>
<dbReference type="STRING" id="331117.A1DEH0"/>
<dbReference type="GlyCosmos" id="A1DEH0">
    <property type="glycosylation" value="1 site, No reported glycans"/>
</dbReference>
<dbReference type="EnsemblFungi" id="EAW17777">
    <property type="protein sequence ID" value="EAW17777"/>
    <property type="gene ID" value="NFIA_077100"/>
</dbReference>
<dbReference type="GeneID" id="4586256"/>
<dbReference type="KEGG" id="nfi:NFIA_077100"/>
<dbReference type="VEuPathDB" id="FungiDB:NFIA_077100"/>
<dbReference type="eggNOG" id="ENOG502RZWS">
    <property type="taxonomic scope" value="Eukaryota"/>
</dbReference>
<dbReference type="HOGENOM" id="CLU_021980_0_1_1"/>
<dbReference type="OMA" id="WSAGCNG"/>
<dbReference type="OrthoDB" id="2019149at2759"/>
<dbReference type="Proteomes" id="UP000006702">
    <property type="component" value="Unassembled WGS sequence"/>
</dbReference>
<dbReference type="GO" id="GO:0005576">
    <property type="term" value="C:extracellular region"/>
    <property type="evidence" value="ECO:0007669"/>
    <property type="project" value="UniProtKB-SubCell"/>
</dbReference>
<dbReference type="GO" id="GO:0030570">
    <property type="term" value="F:pectate lyase activity"/>
    <property type="evidence" value="ECO:0007669"/>
    <property type="project" value="InterPro"/>
</dbReference>
<dbReference type="GO" id="GO:0047490">
    <property type="term" value="F:pectin lyase activity"/>
    <property type="evidence" value="ECO:0000250"/>
    <property type="project" value="UniProtKB"/>
</dbReference>
<dbReference type="GO" id="GO:0071555">
    <property type="term" value="P:cell wall organization"/>
    <property type="evidence" value="ECO:0007669"/>
    <property type="project" value="UniProtKB-KW"/>
</dbReference>
<dbReference type="GO" id="GO:0045490">
    <property type="term" value="P:pectin catabolic process"/>
    <property type="evidence" value="ECO:0000250"/>
    <property type="project" value="UniProtKB"/>
</dbReference>
<dbReference type="FunFam" id="2.160.20.10:FF:000003">
    <property type="entry name" value="Pectin lyase F"/>
    <property type="match status" value="1"/>
</dbReference>
<dbReference type="Gene3D" id="2.160.20.10">
    <property type="entry name" value="Single-stranded right-handed beta-helix, Pectin lyase-like"/>
    <property type="match status" value="1"/>
</dbReference>
<dbReference type="InterPro" id="IPR002022">
    <property type="entry name" value="Pec_lyase"/>
</dbReference>
<dbReference type="InterPro" id="IPR012334">
    <property type="entry name" value="Pectin_lyas_fold"/>
</dbReference>
<dbReference type="InterPro" id="IPR011050">
    <property type="entry name" value="Pectin_lyase_fold/virulence"/>
</dbReference>
<dbReference type="InterPro" id="IPR045032">
    <property type="entry name" value="PEL"/>
</dbReference>
<dbReference type="PANTHER" id="PTHR31683">
    <property type="entry name" value="PECTATE LYASE 18-RELATED"/>
    <property type="match status" value="1"/>
</dbReference>
<dbReference type="PANTHER" id="PTHR31683:SF67">
    <property type="entry name" value="PECTIN LYASE F-RELATED"/>
    <property type="match status" value="1"/>
</dbReference>
<dbReference type="Pfam" id="PF00544">
    <property type="entry name" value="Pectate_lyase_4"/>
    <property type="match status" value="1"/>
</dbReference>
<dbReference type="SMART" id="SM00656">
    <property type="entry name" value="Amb_all"/>
    <property type="match status" value="1"/>
</dbReference>
<dbReference type="SUPFAM" id="SSF51126">
    <property type="entry name" value="Pectin lyase-like"/>
    <property type="match status" value="1"/>
</dbReference>
<reference key="1">
    <citation type="journal article" date="2008" name="PLoS Genet.">
        <title>Genomic islands in the pathogenic filamentous fungus Aspergillus fumigatus.</title>
        <authorList>
            <person name="Fedorova N.D."/>
            <person name="Khaldi N."/>
            <person name="Joardar V.S."/>
            <person name="Maiti R."/>
            <person name="Amedeo P."/>
            <person name="Anderson M.J."/>
            <person name="Crabtree J."/>
            <person name="Silva J.C."/>
            <person name="Badger J.H."/>
            <person name="Albarraq A."/>
            <person name="Angiuoli S."/>
            <person name="Bussey H."/>
            <person name="Bowyer P."/>
            <person name="Cotty P.J."/>
            <person name="Dyer P.S."/>
            <person name="Egan A."/>
            <person name="Galens K."/>
            <person name="Fraser-Liggett C.M."/>
            <person name="Haas B.J."/>
            <person name="Inman J.M."/>
            <person name="Kent R."/>
            <person name="Lemieux S."/>
            <person name="Malavazi I."/>
            <person name="Orvis J."/>
            <person name="Roemer T."/>
            <person name="Ronning C.M."/>
            <person name="Sundaram J.P."/>
            <person name="Sutton G."/>
            <person name="Turner G."/>
            <person name="Venter J.C."/>
            <person name="White O.R."/>
            <person name="Whitty B.R."/>
            <person name="Youngman P."/>
            <person name="Wolfe K.H."/>
            <person name="Goldman G.H."/>
            <person name="Wortman J.R."/>
            <person name="Jiang B."/>
            <person name="Denning D.W."/>
            <person name="Nierman W.C."/>
        </authorList>
    </citation>
    <scope>NUCLEOTIDE SEQUENCE [LARGE SCALE GENOMIC DNA]</scope>
    <source>
        <strain>ATCC 1020 / DSM 3700 / CBS 544.65 / FGSC A1164 / JCM 1740 / NRRL 181 / WB 181</strain>
    </source>
</reference>
<proteinExistence type="inferred from homology"/>
<comment type="function">
    <text evidence="1">Pectinolytic enzymes consist of four classes of enzymes: pectin lyase, polygalacturonase, pectin methylesterase and rhamnogalacturonase. Among pectinolytic enzymes, pectin lyase is the most important in depolymerization of pectin, since it cleaves internal glycosidic bonds of highly methylated pectins (By similarity).</text>
</comment>
<comment type="catalytic activity">
    <reaction>
        <text>Eliminative cleavage of (1-&gt;4)-alpha-D-galacturonan methyl ester to give oligosaccharides with 4-deoxy-6-O-methyl-alpha-D-galact-4-enuronosyl groups at their non-reducing ends.</text>
        <dbReference type="EC" id="4.2.2.10"/>
    </reaction>
</comment>
<comment type="subcellular location">
    <subcellularLocation>
        <location evidence="1">Secreted</location>
    </subcellularLocation>
</comment>
<comment type="similarity">
    <text evidence="3">Belongs to the polysaccharide lyase 1 family.</text>
</comment>